<name>ATPE_SALG2</name>
<evidence type="ECO:0000255" key="1">
    <source>
        <dbReference type="HAMAP-Rule" id="MF_00530"/>
    </source>
</evidence>
<organism>
    <name type="scientific">Salmonella gallinarum (strain 287/91 / NCTC 13346)</name>
    <dbReference type="NCBI Taxonomy" id="550538"/>
    <lineage>
        <taxon>Bacteria</taxon>
        <taxon>Pseudomonadati</taxon>
        <taxon>Pseudomonadota</taxon>
        <taxon>Gammaproteobacteria</taxon>
        <taxon>Enterobacterales</taxon>
        <taxon>Enterobacteriaceae</taxon>
        <taxon>Salmonella</taxon>
    </lineage>
</organism>
<comment type="function">
    <text evidence="1">Produces ATP from ADP in the presence of a proton gradient across the membrane.</text>
</comment>
<comment type="subunit">
    <text evidence="1">F-type ATPases have 2 components, CF(1) - the catalytic core - and CF(0) - the membrane proton channel. CF(1) has five subunits: alpha(3), beta(3), gamma(1), delta(1), epsilon(1). CF(0) has three main subunits: a, b and c.</text>
</comment>
<comment type="subcellular location">
    <subcellularLocation>
        <location evidence="1">Cell inner membrane</location>
        <topology evidence="1">Peripheral membrane protein</topology>
    </subcellularLocation>
</comment>
<comment type="similarity">
    <text evidence="1">Belongs to the ATPase epsilon chain family.</text>
</comment>
<feature type="chain" id="PRO_1000127887" description="ATP synthase epsilon chain">
    <location>
        <begin position="1"/>
        <end position="139"/>
    </location>
</feature>
<accession>B5RFW4</accession>
<gene>
    <name evidence="1" type="primary">atpC</name>
    <name type="ordered locus">SG3569</name>
</gene>
<proteinExistence type="inferred from homology"/>
<keyword id="KW-0066">ATP synthesis</keyword>
<keyword id="KW-0997">Cell inner membrane</keyword>
<keyword id="KW-1003">Cell membrane</keyword>
<keyword id="KW-0139">CF(1)</keyword>
<keyword id="KW-0375">Hydrogen ion transport</keyword>
<keyword id="KW-0406">Ion transport</keyword>
<keyword id="KW-0472">Membrane</keyword>
<keyword id="KW-0813">Transport</keyword>
<protein>
    <recommendedName>
        <fullName evidence="1">ATP synthase epsilon chain</fullName>
    </recommendedName>
    <alternativeName>
        <fullName evidence="1">ATP synthase F1 sector epsilon subunit</fullName>
    </alternativeName>
    <alternativeName>
        <fullName evidence="1">F-ATPase epsilon subunit</fullName>
    </alternativeName>
</protein>
<dbReference type="EMBL" id="AM933173">
    <property type="protein sequence ID" value="CAR39358.1"/>
    <property type="molecule type" value="Genomic_DNA"/>
</dbReference>
<dbReference type="RefSeq" id="WP_001251971.1">
    <property type="nucleotide sequence ID" value="NC_011274.1"/>
</dbReference>
<dbReference type="SMR" id="B5RFW4"/>
<dbReference type="KEGG" id="seg:SG3569"/>
<dbReference type="HOGENOM" id="CLU_084338_2_0_6"/>
<dbReference type="Proteomes" id="UP000008321">
    <property type="component" value="Chromosome"/>
</dbReference>
<dbReference type="GO" id="GO:0005886">
    <property type="term" value="C:plasma membrane"/>
    <property type="evidence" value="ECO:0007669"/>
    <property type="project" value="UniProtKB-SubCell"/>
</dbReference>
<dbReference type="GO" id="GO:0045259">
    <property type="term" value="C:proton-transporting ATP synthase complex"/>
    <property type="evidence" value="ECO:0007669"/>
    <property type="project" value="UniProtKB-KW"/>
</dbReference>
<dbReference type="GO" id="GO:0005524">
    <property type="term" value="F:ATP binding"/>
    <property type="evidence" value="ECO:0007669"/>
    <property type="project" value="UniProtKB-UniRule"/>
</dbReference>
<dbReference type="GO" id="GO:0046933">
    <property type="term" value="F:proton-transporting ATP synthase activity, rotational mechanism"/>
    <property type="evidence" value="ECO:0007669"/>
    <property type="project" value="UniProtKB-UniRule"/>
</dbReference>
<dbReference type="CDD" id="cd12152">
    <property type="entry name" value="F1-ATPase_delta"/>
    <property type="match status" value="1"/>
</dbReference>
<dbReference type="FunFam" id="1.20.5.440:FF:000001">
    <property type="entry name" value="ATP synthase epsilon chain"/>
    <property type="match status" value="1"/>
</dbReference>
<dbReference type="FunFam" id="2.60.15.10:FF:000001">
    <property type="entry name" value="ATP synthase epsilon chain"/>
    <property type="match status" value="1"/>
</dbReference>
<dbReference type="Gene3D" id="1.20.5.440">
    <property type="entry name" value="ATP synthase delta/epsilon subunit, C-terminal domain"/>
    <property type="match status" value="1"/>
</dbReference>
<dbReference type="Gene3D" id="2.60.15.10">
    <property type="entry name" value="F0F1 ATP synthase delta/epsilon subunit, N-terminal"/>
    <property type="match status" value="1"/>
</dbReference>
<dbReference type="HAMAP" id="MF_00530">
    <property type="entry name" value="ATP_synth_epsil_bac"/>
    <property type="match status" value="1"/>
</dbReference>
<dbReference type="InterPro" id="IPR036794">
    <property type="entry name" value="ATP_F1_dsu/esu_C_sf"/>
</dbReference>
<dbReference type="InterPro" id="IPR001469">
    <property type="entry name" value="ATP_synth_F1_dsu/esu"/>
</dbReference>
<dbReference type="InterPro" id="IPR020546">
    <property type="entry name" value="ATP_synth_F1_dsu/esu_N"/>
</dbReference>
<dbReference type="InterPro" id="IPR020547">
    <property type="entry name" value="ATP_synth_F1_esu_C"/>
</dbReference>
<dbReference type="InterPro" id="IPR036771">
    <property type="entry name" value="ATPsynth_dsu/esu_N"/>
</dbReference>
<dbReference type="NCBIfam" id="TIGR01216">
    <property type="entry name" value="ATP_synt_epsi"/>
    <property type="match status" value="1"/>
</dbReference>
<dbReference type="NCBIfam" id="NF001847">
    <property type="entry name" value="PRK00571.1-4"/>
    <property type="match status" value="1"/>
</dbReference>
<dbReference type="PANTHER" id="PTHR13822">
    <property type="entry name" value="ATP SYNTHASE DELTA/EPSILON CHAIN"/>
    <property type="match status" value="1"/>
</dbReference>
<dbReference type="PANTHER" id="PTHR13822:SF10">
    <property type="entry name" value="ATP SYNTHASE EPSILON CHAIN, CHLOROPLASTIC"/>
    <property type="match status" value="1"/>
</dbReference>
<dbReference type="Pfam" id="PF00401">
    <property type="entry name" value="ATP-synt_DE"/>
    <property type="match status" value="1"/>
</dbReference>
<dbReference type="Pfam" id="PF02823">
    <property type="entry name" value="ATP-synt_DE_N"/>
    <property type="match status" value="1"/>
</dbReference>
<dbReference type="SUPFAM" id="SSF46604">
    <property type="entry name" value="Epsilon subunit of F1F0-ATP synthase C-terminal domain"/>
    <property type="match status" value="1"/>
</dbReference>
<dbReference type="SUPFAM" id="SSF51344">
    <property type="entry name" value="Epsilon subunit of F1F0-ATP synthase N-terminal domain"/>
    <property type="match status" value="1"/>
</dbReference>
<reference key="1">
    <citation type="journal article" date="2008" name="Genome Res.">
        <title>Comparative genome analysis of Salmonella enteritidis PT4 and Salmonella gallinarum 287/91 provides insights into evolutionary and host adaptation pathways.</title>
        <authorList>
            <person name="Thomson N.R."/>
            <person name="Clayton D.J."/>
            <person name="Windhorst D."/>
            <person name="Vernikos G."/>
            <person name="Davidson S."/>
            <person name="Churcher C."/>
            <person name="Quail M.A."/>
            <person name="Stevens M."/>
            <person name="Jones M.A."/>
            <person name="Watson M."/>
            <person name="Barron A."/>
            <person name="Layton A."/>
            <person name="Pickard D."/>
            <person name="Kingsley R.A."/>
            <person name="Bignell A."/>
            <person name="Clark L."/>
            <person name="Harris B."/>
            <person name="Ormond D."/>
            <person name="Abdellah Z."/>
            <person name="Brooks K."/>
            <person name="Cherevach I."/>
            <person name="Chillingworth T."/>
            <person name="Woodward J."/>
            <person name="Norberczak H."/>
            <person name="Lord A."/>
            <person name="Arrowsmith C."/>
            <person name="Jagels K."/>
            <person name="Moule S."/>
            <person name="Mungall K."/>
            <person name="Saunders M."/>
            <person name="Whitehead S."/>
            <person name="Chabalgoity J.A."/>
            <person name="Maskell D."/>
            <person name="Humphreys T."/>
            <person name="Roberts M."/>
            <person name="Barrow P.A."/>
            <person name="Dougan G."/>
            <person name="Parkhill J."/>
        </authorList>
    </citation>
    <scope>NUCLEOTIDE SEQUENCE [LARGE SCALE GENOMIC DNA]</scope>
    <source>
        <strain>287/91 / NCTC 13346</strain>
    </source>
</reference>
<sequence>MAMTYHLDVVSAEQQMFSGLVEKIQVTGSEGELGIYPGHAPLLTAIKPGMIRIVKQHGHEEFIYLSGGILEVQPGSVTVLADTAIRGQDLDEARALEAKRKAEEHIKSSHGDVDYAQASAELAKAIAKLRVIELTKKAM</sequence>